<organism>
    <name type="scientific">Bacillus cereus (strain ATCC 14579 / DSM 31 / CCUG 7414 / JCM 2152 / NBRC 15305 / NCIMB 9373 / NCTC 2599 / NRRL B-3711)</name>
    <dbReference type="NCBI Taxonomy" id="226900"/>
    <lineage>
        <taxon>Bacteria</taxon>
        <taxon>Bacillati</taxon>
        <taxon>Bacillota</taxon>
        <taxon>Bacilli</taxon>
        <taxon>Bacillales</taxon>
        <taxon>Bacillaceae</taxon>
        <taxon>Bacillus</taxon>
        <taxon>Bacillus cereus group</taxon>
    </lineage>
</organism>
<feature type="chain" id="PRO_0000088220" description="3-phosphoshikimate 1-carboxyvinyltransferase">
    <location>
        <begin position="1"/>
        <end position="429"/>
    </location>
</feature>
<feature type="active site" description="Proton acceptor" evidence="1">
    <location>
        <position position="316"/>
    </location>
</feature>
<feature type="binding site" evidence="1">
    <location>
        <position position="23"/>
    </location>
    <ligand>
        <name>3-phosphoshikimate</name>
        <dbReference type="ChEBI" id="CHEBI:145989"/>
    </ligand>
</feature>
<feature type="binding site" evidence="1">
    <location>
        <position position="23"/>
    </location>
    <ligand>
        <name>phosphoenolpyruvate</name>
        <dbReference type="ChEBI" id="CHEBI:58702"/>
    </ligand>
</feature>
<feature type="binding site" evidence="1">
    <location>
        <position position="24"/>
    </location>
    <ligand>
        <name>3-phosphoshikimate</name>
        <dbReference type="ChEBI" id="CHEBI:145989"/>
    </ligand>
</feature>
<feature type="binding site" evidence="1">
    <location>
        <position position="28"/>
    </location>
    <ligand>
        <name>3-phosphoshikimate</name>
        <dbReference type="ChEBI" id="CHEBI:145989"/>
    </ligand>
</feature>
<feature type="binding site" evidence="1">
    <location>
        <position position="95"/>
    </location>
    <ligand>
        <name>phosphoenolpyruvate</name>
        <dbReference type="ChEBI" id="CHEBI:58702"/>
    </ligand>
</feature>
<feature type="binding site" evidence="1">
    <location>
        <position position="123"/>
    </location>
    <ligand>
        <name>phosphoenolpyruvate</name>
        <dbReference type="ChEBI" id="CHEBI:58702"/>
    </ligand>
</feature>
<feature type="binding site" evidence="1">
    <location>
        <position position="168"/>
    </location>
    <ligand>
        <name>3-phosphoshikimate</name>
        <dbReference type="ChEBI" id="CHEBI:145989"/>
    </ligand>
</feature>
<feature type="binding site" evidence="1">
    <location>
        <position position="170"/>
    </location>
    <ligand>
        <name>3-phosphoshikimate</name>
        <dbReference type="ChEBI" id="CHEBI:145989"/>
    </ligand>
</feature>
<feature type="binding site" evidence="1">
    <location>
        <position position="170"/>
    </location>
    <ligand>
        <name>phosphoenolpyruvate</name>
        <dbReference type="ChEBI" id="CHEBI:58702"/>
    </ligand>
</feature>
<feature type="binding site" evidence="1">
    <location>
        <position position="316"/>
    </location>
    <ligand>
        <name>3-phosphoshikimate</name>
        <dbReference type="ChEBI" id="CHEBI:145989"/>
    </ligand>
</feature>
<feature type="binding site" evidence="1">
    <location>
        <position position="343"/>
    </location>
    <ligand>
        <name>3-phosphoshikimate</name>
        <dbReference type="ChEBI" id="CHEBI:145989"/>
    </ligand>
</feature>
<feature type="binding site" evidence="1">
    <location>
        <position position="347"/>
    </location>
    <ligand>
        <name>phosphoenolpyruvate</name>
        <dbReference type="ChEBI" id="CHEBI:58702"/>
    </ligand>
</feature>
<feature type="binding site" evidence="1">
    <location>
        <position position="389"/>
    </location>
    <ligand>
        <name>phosphoenolpyruvate</name>
        <dbReference type="ChEBI" id="CHEBI:58702"/>
    </ligand>
</feature>
<accession>Q81C45</accession>
<keyword id="KW-0028">Amino-acid biosynthesis</keyword>
<keyword id="KW-0057">Aromatic amino acid biosynthesis</keyword>
<keyword id="KW-0963">Cytoplasm</keyword>
<keyword id="KW-1185">Reference proteome</keyword>
<keyword id="KW-0808">Transferase</keyword>
<proteinExistence type="inferred from homology"/>
<gene>
    <name evidence="1" type="primary">aroA</name>
    <name type="ordered locus">BC_2938</name>
</gene>
<dbReference type="EC" id="2.5.1.19" evidence="1"/>
<dbReference type="EMBL" id="AE016877">
    <property type="protein sequence ID" value="AAP09886.1"/>
    <property type="molecule type" value="Genomic_DNA"/>
</dbReference>
<dbReference type="RefSeq" id="NP_832685.1">
    <property type="nucleotide sequence ID" value="NC_004722.1"/>
</dbReference>
<dbReference type="RefSeq" id="WP_000664630.1">
    <property type="nucleotide sequence ID" value="NZ_CP138336.1"/>
</dbReference>
<dbReference type="SMR" id="Q81C45"/>
<dbReference type="STRING" id="226900.BC_2938"/>
<dbReference type="MetOSite" id="Q81C45"/>
<dbReference type="KEGG" id="bce:BC2938"/>
<dbReference type="PATRIC" id="fig|226900.8.peg.3013"/>
<dbReference type="HOGENOM" id="CLU_024321_0_1_9"/>
<dbReference type="OrthoDB" id="9809920at2"/>
<dbReference type="UniPathway" id="UPA00053">
    <property type="reaction ID" value="UER00089"/>
</dbReference>
<dbReference type="Proteomes" id="UP000001417">
    <property type="component" value="Chromosome"/>
</dbReference>
<dbReference type="GO" id="GO:0005737">
    <property type="term" value="C:cytoplasm"/>
    <property type="evidence" value="ECO:0007669"/>
    <property type="project" value="UniProtKB-SubCell"/>
</dbReference>
<dbReference type="GO" id="GO:0003866">
    <property type="term" value="F:3-phosphoshikimate 1-carboxyvinyltransferase activity"/>
    <property type="evidence" value="ECO:0000318"/>
    <property type="project" value="GO_Central"/>
</dbReference>
<dbReference type="GO" id="GO:0008652">
    <property type="term" value="P:amino acid biosynthetic process"/>
    <property type="evidence" value="ECO:0007669"/>
    <property type="project" value="UniProtKB-KW"/>
</dbReference>
<dbReference type="GO" id="GO:0009073">
    <property type="term" value="P:aromatic amino acid family biosynthetic process"/>
    <property type="evidence" value="ECO:0007669"/>
    <property type="project" value="UniProtKB-KW"/>
</dbReference>
<dbReference type="GO" id="GO:0009423">
    <property type="term" value="P:chorismate biosynthetic process"/>
    <property type="evidence" value="ECO:0000318"/>
    <property type="project" value="GO_Central"/>
</dbReference>
<dbReference type="CDD" id="cd01556">
    <property type="entry name" value="EPSP_synthase"/>
    <property type="match status" value="1"/>
</dbReference>
<dbReference type="FunFam" id="3.65.10.10:FF:000005">
    <property type="entry name" value="3-phosphoshikimate 1-carboxyvinyltransferase"/>
    <property type="match status" value="1"/>
</dbReference>
<dbReference type="FunFam" id="3.65.10.10:FF:000006">
    <property type="entry name" value="3-phosphoshikimate 1-carboxyvinyltransferase"/>
    <property type="match status" value="1"/>
</dbReference>
<dbReference type="Gene3D" id="3.65.10.10">
    <property type="entry name" value="Enolpyruvate transferase domain"/>
    <property type="match status" value="2"/>
</dbReference>
<dbReference type="HAMAP" id="MF_00210">
    <property type="entry name" value="EPSP_synth"/>
    <property type="match status" value="1"/>
</dbReference>
<dbReference type="InterPro" id="IPR001986">
    <property type="entry name" value="Enolpyruvate_Tfrase_dom"/>
</dbReference>
<dbReference type="InterPro" id="IPR036968">
    <property type="entry name" value="Enolpyruvate_Tfrase_sf"/>
</dbReference>
<dbReference type="InterPro" id="IPR006264">
    <property type="entry name" value="EPSP_synthase"/>
</dbReference>
<dbReference type="InterPro" id="IPR023193">
    <property type="entry name" value="EPSP_synthase_CS"/>
</dbReference>
<dbReference type="InterPro" id="IPR013792">
    <property type="entry name" value="RNA3'P_cycl/enolpyr_Trfase_a/b"/>
</dbReference>
<dbReference type="NCBIfam" id="TIGR01356">
    <property type="entry name" value="aroA"/>
    <property type="match status" value="1"/>
</dbReference>
<dbReference type="PANTHER" id="PTHR21090">
    <property type="entry name" value="AROM/DEHYDROQUINATE SYNTHASE"/>
    <property type="match status" value="1"/>
</dbReference>
<dbReference type="PANTHER" id="PTHR21090:SF5">
    <property type="entry name" value="PENTAFUNCTIONAL AROM POLYPEPTIDE"/>
    <property type="match status" value="1"/>
</dbReference>
<dbReference type="Pfam" id="PF00275">
    <property type="entry name" value="EPSP_synthase"/>
    <property type="match status" value="1"/>
</dbReference>
<dbReference type="PIRSF" id="PIRSF000505">
    <property type="entry name" value="EPSPS"/>
    <property type="match status" value="1"/>
</dbReference>
<dbReference type="SUPFAM" id="SSF55205">
    <property type="entry name" value="EPT/RTPC-like"/>
    <property type="match status" value="1"/>
</dbReference>
<dbReference type="PROSITE" id="PS00104">
    <property type="entry name" value="EPSP_SYNTHASE_1"/>
    <property type="match status" value="1"/>
</dbReference>
<dbReference type="PROSITE" id="PS00885">
    <property type="entry name" value="EPSP_SYNTHASE_2"/>
    <property type="match status" value="1"/>
</dbReference>
<evidence type="ECO:0000255" key="1">
    <source>
        <dbReference type="HAMAP-Rule" id="MF_00210"/>
    </source>
</evidence>
<reference key="1">
    <citation type="journal article" date="2003" name="Nature">
        <title>Genome sequence of Bacillus cereus and comparative analysis with Bacillus anthracis.</title>
        <authorList>
            <person name="Ivanova N."/>
            <person name="Sorokin A."/>
            <person name="Anderson I."/>
            <person name="Galleron N."/>
            <person name="Candelon B."/>
            <person name="Kapatral V."/>
            <person name="Bhattacharyya A."/>
            <person name="Reznik G."/>
            <person name="Mikhailova N."/>
            <person name="Lapidus A."/>
            <person name="Chu L."/>
            <person name="Mazur M."/>
            <person name="Goltsman E."/>
            <person name="Larsen N."/>
            <person name="D'Souza M."/>
            <person name="Walunas T."/>
            <person name="Grechkin Y."/>
            <person name="Pusch G."/>
            <person name="Haselkorn R."/>
            <person name="Fonstein M."/>
            <person name="Ehrlich S.D."/>
            <person name="Overbeek R."/>
            <person name="Kyrpides N.C."/>
        </authorList>
    </citation>
    <scope>NUCLEOTIDE SEQUENCE [LARGE SCALE GENOMIC DNA]</scope>
    <source>
        <strain>ATCC 14579 / DSM 31 / CCUG 7414 / JCM 2152 / NBRC 15305 / NCIMB 9373 / NCTC 2599 / NRRL B-3711</strain>
    </source>
</reference>
<name>AROA_BACCR</name>
<sequence length="429" mass="45315">MKERTIQPVNNGLNGNITIPGDKSISHRAVMFGSIAEGKTTIKGFLPGADCLSTISCFKEMGVEITQNGDEVTVVGKGLEGLQEPKAVLDVGNSGTTIRLMSGILANTPFFSCVQGDESIAKRPMKRVTNPLKQMGANIDGREEGTFTPLTIRGGDLKAIEYISPVASAQVKSAILLAGLRAEGVTAVTEPHISRDHTERMLEAFGVKVTREGKTVKLSGGQKLTATDIQVPGDVSSAAFFLVAGAIIPNSKLVLQNVGMNPTRTGIIDVLEKMGATFTVDLINEGASEPAANITIETSSLKGIEIGGDIIPRLIDEIPVIALAATQAEGITVIKDAHELKVKETNRIDTVVAELTKLGARIEATDDGMIIYGKSALKGNTVNSYGDHRIGMMLAIAGCLAEGKTIIEDAEAVGVSYPTFFDELQKLAK</sequence>
<protein>
    <recommendedName>
        <fullName evidence="1">3-phosphoshikimate 1-carboxyvinyltransferase</fullName>
        <ecNumber evidence="1">2.5.1.19</ecNumber>
    </recommendedName>
    <alternativeName>
        <fullName evidence="1">5-enolpyruvylshikimate-3-phosphate synthase</fullName>
        <shortName evidence="1">EPSP synthase</shortName>
        <shortName evidence="1">EPSPS</shortName>
    </alternativeName>
</protein>
<comment type="function">
    <text evidence="1">Catalyzes the transfer of the enolpyruvyl moiety of phosphoenolpyruvate (PEP) to the 5-hydroxyl of shikimate-3-phosphate (S3P) to produce enolpyruvyl shikimate-3-phosphate and inorganic phosphate.</text>
</comment>
<comment type="catalytic activity">
    <reaction evidence="1">
        <text>3-phosphoshikimate + phosphoenolpyruvate = 5-O-(1-carboxyvinyl)-3-phosphoshikimate + phosphate</text>
        <dbReference type="Rhea" id="RHEA:21256"/>
        <dbReference type="ChEBI" id="CHEBI:43474"/>
        <dbReference type="ChEBI" id="CHEBI:57701"/>
        <dbReference type="ChEBI" id="CHEBI:58702"/>
        <dbReference type="ChEBI" id="CHEBI:145989"/>
        <dbReference type="EC" id="2.5.1.19"/>
    </reaction>
    <physiologicalReaction direction="left-to-right" evidence="1">
        <dbReference type="Rhea" id="RHEA:21257"/>
    </physiologicalReaction>
</comment>
<comment type="pathway">
    <text evidence="1">Metabolic intermediate biosynthesis; chorismate biosynthesis; chorismate from D-erythrose 4-phosphate and phosphoenolpyruvate: step 6/7.</text>
</comment>
<comment type="subunit">
    <text evidence="1">Monomer.</text>
</comment>
<comment type="subcellular location">
    <subcellularLocation>
        <location evidence="1">Cytoplasm</location>
    </subcellularLocation>
</comment>
<comment type="similarity">
    <text evidence="1">Belongs to the EPSP synthase family.</text>
</comment>